<name>HTM_MYCBP</name>
<organism>
    <name type="scientific">Mycobacterium bovis (strain BCG / Pasteur 1173P2)</name>
    <dbReference type="NCBI Taxonomy" id="410289"/>
    <lineage>
        <taxon>Bacteria</taxon>
        <taxon>Bacillati</taxon>
        <taxon>Actinomycetota</taxon>
        <taxon>Actinomycetes</taxon>
        <taxon>Mycobacteriales</taxon>
        <taxon>Mycobacteriaceae</taxon>
        <taxon>Mycobacterium</taxon>
        <taxon>Mycobacterium tuberculosis complex</taxon>
    </lineage>
</organism>
<proteinExistence type="evidence at protein level"/>
<reference key="1">
    <citation type="journal article" date="2007" name="Proc. Natl. Acad. Sci. U.S.A.">
        <title>Genome plasticity of BCG and impact on vaccine efficacy.</title>
        <authorList>
            <person name="Brosch R."/>
            <person name="Gordon S.V."/>
            <person name="Garnier T."/>
            <person name="Eiglmeier K."/>
            <person name="Frigui W."/>
            <person name="Valenti P."/>
            <person name="Dos Santos S."/>
            <person name="Duthoy S."/>
            <person name="Lacroix C."/>
            <person name="Garcia-Pelayo C."/>
            <person name="Inwald J.K."/>
            <person name="Golby P."/>
            <person name="Garcia J.N."/>
            <person name="Hewinson R.G."/>
            <person name="Behr M.A."/>
            <person name="Quail M.A."/>
            <person name="Churcher C."/>
            <person name="Barrell B.G."/>
            <person name="Parkhill J."/>
            <person name="Cole S.T."/>
        </authorList>
    </citation>
    <scope>NUCLEOTIDE SEQUENCE [LARGE SCALE GENOMIC DNA]</scope>
    <source>
        <strain>BCG / Pasteur 1173P2</strain>
    </source>
</reference>
<reference key="2">
    <citation type="journal article" date="2001" name="FEMS Microbiol. Lett.">
        <title>Salicylate uniquely induces a 27-kDa protein in tubercle bacillus.</title>
        <authorList>
            <person name="Sun Z."/>
            <person name="Cheng S.J."/>
            <person name="Zhang H."/>
            <person name="Zhang Y."/>
        </authorList>
    </citation>
    <scope>IDENTIFICATION BY MASS SPECTROMETRY</scope>
    <scope>INDUCTION</scope>
    <source>
        <strain>BCG / Pasteur 1173P2</strain>
    </source>
</reference>
<keyword id="KW-0963">Cytoplasm</keyword>
<keyword id="KW-0489">Methyltransferase</keyword>
<keyword id="KW-0949">S-adenosyl-L-methionine</keyword>
<keyword id="KW-0808">Transferase</keyword>
<sequence>MSTVLTYIRAVDIYEHMTESLDLEFESAYRGESVAFGEGVRPPWSIGEPQPELAALIVQGKFRGDVLDVGCGEAAISLALAERGHTTVGLDLSPAAVELARHEAAKRGLANASFEVADASSFTGYDGRFDTIVDSTLFHSMPVESREGYLQSIVRAAAPGASYFVLVFDRAAIPEGPINAVTEDELRAAVSKYWIIDEIKPARLYARFPAGFAGMPALLDIREEPNGLQSIGGWLLSAHLG</sequence>
<protein>
    <recommendedName>
        <fullName evidence="2">2-heptyl-1-hydroxyquinolin-4(1H)-one methyltransferase</fullName>
        <shortName evidence="2">HQNO methyltransferase</shortName>
        <shortName evidence="2">HQNO-MTase</shortName>
        <ecNumber evidence="2">2.1.1.374</ecNumber>
    </recommendedName>
    <alternativeName>
        <fullName evidence="2">Heterocyclic toxin methyltransferase</fullName>
    </alternativeName>
</protein>
<feature type="chain" id="PRO_0000419775" description="2-heptyl-1-hydroxyquinolin-4(1H)-one methyltransferase">
    <location>
        <begin position="1"/>
        <end position="241"/>
    </location>
</feature>
<gene>
    <name evidence="2" type="primary">htm</name>
    <name type="ordered locus">BCG_0605c</name>
</gene>
<accession>A1KG37</accession>
<comment type="function">
    <text evidence="2">Involved in cellular response to chemical stress and may contribute to resistance toward antimicrobial natural compounds as well as drugs. Catalyzes the methylation and detoxification of the P.aeruginosa toxin 2-heptyl-1-hydroxy-4(1H)-quinolinone (HQNO) to 2-heptyl-1-methoxy-4(1H)-quinolinone (HMOQ).</text>
</comment>
<comment type="catalytic activity">
    <reaction evidence="2">
        <text>2-heptyl-1-hydroxy-4(1H)-quinolinone + S-adenosyl-L-methionine = 2-heptyl-1-methoxy-4(1H)-quinolinone + S-adenosyl-L-homocysteine + H(+)</text>
        <dbReference type="Rhea" id="RHEA:65924"/>
        <dbReference type="ChEBI" id="CHEBI:15378"/>
        <dbReference type="ChEBI" id="CHEBI:57856"/>
        <dbReference type="ChEBI" id="CHEBI:59789"/>
        <dbReference type="ChEBI" id="CHEBI:157768"/>
        <dbReference type="ChEBI" id="CHEBI:157769"/>
        <dbReference type="EC" id="2.1.1.374"/>
    </reaction>
    <physiologicalReaction direction="left-to-right" evidence="2">
        <dbReference type="Rhea" id="RHEA:65925"/>
    </physiologicalReaction>
</comment>
<comment type="subunit">
    <text evidence="2">Monomer.</text>
</comment>
<comment type="subcellular location">
    <subcellularLocation>
        <location evidence="1">Cytoplasm</location>
    </subcellularLocation>
</comment>
<comment type="induction">
    <text evidence="3">By salicylate (at protein level).</text>
</comment>
<comment type="similarity">
    <text evidence="4">Belongs to the methyltransferase superfamily.</text>
</comment>
<evidence type="ECO:0000250" key="1">
    <source>
        <dbReference type="UniProtKB" id="A5TZU0"/>
    </source>
</evidence>
<evidence type="ECO:0000250" key="2">
    <source>
        <dbReference type="UniProtKB" id="P9WKL5"/>
    </source>
</evidence>
<evidence type="ECO:0000269" key="3">
    <source>
    </source>
</evidence>
<evidence type="ECO:0000305" key="4"/>
<dbReference type="EC" id="2.1.1.374" evidence="2"/>
<dbReference type="EMBL" id="AM408590">
    <property type="protein sequence ID" value="CAL70590.1"/>
    <property type="molecule type" value="Genomic_DNA"/>
</dbReference>
<dbReference type="SMR" id="A1KG37"/>
<dbReference type="KEGG" id="mbb:BCG_0605c"/>
<dbReference type="HOGENOM" id="CLU_056435_4_2_11"/>
<dbReference type="Proteomes" id="UP000001472">
    <property type="component" value="Chromosome"/>
</dbReference>
<dbReference type="GO" id="GO:0005737">
    <property type="term" value="C:cytoplasm"/>
    <property type="evidence" value="ECO:0007669"/>
    <property type="project" value="UniProtKB-SubCell"/>
</dbReference>
<dbReference type="GO" id="GO:0008168">
    <property type="term" value="F:methyltransferase activity"/>
    <property type="evidence" value="ECO:0007669"/>
    <property type="project" value="UniProtKB-KW"/>
</dbReference>
<dbReference type="GO" id="GO:0032259">
    <property type="term" value="P:methylation"/>
    <property type="evidence" value="ECO:0007669"/>
    <property type="project" value="UniProtKB-KW"/>
</dbReference>
<dbReference type="CDD" id="cd02440">
    <property type="entry name" value="AdoMet_MTases"/>
    <property type="match status" value="1"/>
</dbReference>
<dbReference type="FunFam" id="3.40.50.150:FF:000291">
    <property type="entry name" value="Benzoquinone methyltransferase"/>
    <property type="match status" value="1"/>
</dbReference>
<dbReference type="Gene3D" id="3.40.50.150">
    <property type="entry name" value="Vaccinia Virus protein VP39"/>
    <property type="match status" value="1"/>
</dbReference>
<dbReference type="InterPro" id="IPR041698">
    <property type="entry name" value="Methyltransf_25"/>
</dbReference>
<dbReference type="InterPro" id="IPR029063">
    <property type="entry name" value="SAM-dependent_MTases_sf"/>
</dbReference>
<dbReference type="PANTHER" id="PTHR43464">
    <property type="entry name" value="METHYLTRANSFERASE"/>
    <property type="match status" value="1"/>
</dbReference>
<dbReference type="PANTHER" id="PTHR43464:SF19">
    <property type="entry name" value="UBIQUINONE BIOSYNTHESIS O-METHYLTRANSFERASE, MITOCHONDRIAL"/>
    <property type="match status" value="1"/>
</dbReference>
<dbReference type="Pfam" id="PF13649">
    <property type="entry name" value="Methyltransf_25"/>
    <property type="match status" value="1"/>
</dbReference>
<dbReference type="SUPFAM" id="SSF53335">
    <property type="entry name" value="S-adenosyl-L-methionine-dependent methyltransferases"/>
    <property type="match status" value="1"/>
</dbReference>